<sequence length="261" mass="28148">MSKISPLAIIEDGAVIGKDVEIGAYCIISSDSTIGDGTKIEQNSCIYGKTTIGKNNHIFSHAVIGSAPQDLKFAGEDVELIIGDNNKIREFTLFNPGTKGGGGKTIIGSHNLFMGYVHIGHDVIIGNHCILANAATLAGHVEMGDYAVIGGMTPIHQFVHIGEYAMVAGASALAQDVPPFCMAEGNRATLRGLNLTGLRRNIEREEIDEIKSAYKELFEAGKPLKDVANEILEHTSSHHVQSLCNFVLKTKRGIPYERKHL</sequence>
<feature type="chain" id="PRO_0000302607" description="Acyl-[acyl-carrier-protein]--UDP-N-acetylglucosamine O-acyltransferase">
    <location>
        <begin position="1"/>
        <end position="261"/>
    </location>
</feature>
<comment type="function">
    <text evidence="1">Involved in the biosynthesis of lipid A, a phosphorylated glycolipid that anchors the lipopolysaccharide to the outer membrane of the cell.</text>
</comment>
<comment type="catalytic activity">
    <reaction evidence="1">
        <text>a (3R)-hydroxyacyl-[ACP] + UDP-N-acetyl-alpha-D-glucosamine = a UDP-3-O-[(3R)-3-hydroxyacyl]-N-acetyl-alpha-D-glucosamine + holo-[ACP]</text>
        <dbReference type="Rhea" id="RHEA:67812"/>
        <dbReference type="Rhea" id="RHEA-COMP:9685"/>
        <dbReference type="Rhea" id="RHEA-COMP:9945"/>
        <dbReference type="ChEBI" id="CHEBI:57705"/>
        <dbReference type="ChEBI" id="CHEBI:64479"/>
        <dbReference type="ChEBI" id="CHEBI:78827"/>
        <dbReference type="ChEBI" id="CHEBI:173225"/>
        <dbReference type="EC" id="2.3.1.129"/>
    </reaction>
</comment>
<comment type="pathway">
    <text evidence="1">Glycolipid biosynthesis; lipid IV(A) biosynthesis; lipid IV(A) from (3R)-3-hydroxytetradecanoyl-[acyl-carrier-protein] and UDP-N-acetyl-alpha-D-glucosamine: step 1/6.</text>
</comment>
<comment type="subunit">
    <text evidence="1">Homotrimer.</text>
</comment>
<comment type="subcellular location">
    <subcellularLocation>
        <location evidence="1">Cytoplasm</location>
    </subcellularLocation>
</comment>
<comment type="similarity">
    <text evidence="1">Belongs to the transferase hexapeptide repeat family. LpxA subfamily.</text>
</comment>
<evidence type="ECO:0000255" key="1">
    <source>
        <dbReference type="HAMAP-Rule" id="MF_00387"/>
    </source>
</evidence>
<keyword id="KW-0012">Acyltransferase</keyword>
<keyword id="KW-0963">Cytoplasm</keyword>
<keyword id="KW-0441">Lipid A biosynthesis</keyword>
<keyword id="KW-0444">Lipid biosynthesis</keyword>
<keyword id="KW-0443">Lipid metabolism</keyword>
<keyword id="KW-1185">Reference proteome</keyword>
<keyword id="KW-0677">Repeat</keyword>
<keyword id="KW-0808">Transferase</keyword>
<proteinExistence type="inferred from homology"/>
<accession>Q30QJ1</accession>
<reference key="1">
    <citation type="journal article" date="2008" name="Appl. Environ. Microbiol.">
        <title>Genome of the epsilonproteobacterial chemolithoautotroph Sulfurimonas denitrificans.</title>
        <authorList>
            <person name="Sievert S.M."/>
            <person name="Scott K.M."/>
            <person name="Klotz M.G."/>
            <person name="Chain P.S.G."/>
            <person name="Hauser L.J."/>
            <person name="Hemp J."/>
            <person name="Huegler M."/>
            <person name="Land M."/>
            <person name="Lapidus A."/>
            <person name="Larimer F.W."/>
            <person name="Lucas S."/>
            <person name="Malfatti S.A."/>
            <person name="Meyer F."/>
            <person name="Paulsen I.T."/>
            <person name="Ren Q."/>
            <person name="Simon J."/>
            <person name="Bailey K."/>
            <person name="Diaz E."/>
            <person name="Fitzpatrick K.A."/>
            <person name="Glover B."/>
            <person name="Gwatney N."/>
            <person name="Korajkic A."/>
            <person name="Long A."/>
            <person name="Mobberley J.M."/>
            <person name="Pantry S.N."/>
            <person name="Pazder G."/>
            <person name="Peterson S."/>
            <person name="Quintanilla J.D."/>
            <person name="Sprinkle R."/>
            <person name="Stephens J."/>
            <person name="Thomas P."/>
            <person name="Vaughn R."/>
            <person name="Weber M.J."/>
            <person name="Wooten L.L."/>
        </authorList>
    </citation>
    <scope>NUCLEOTIDE SEQUENCE [LARGE SCALE GENOMIC DNA]</scope>
    <source>
        <strain>ATCC 33889 / DSM 1251</strain>
    </source>
</reference>
<name>LPXA_SULDN</name>
<gene>
    <name evidence="1" type="primary">lpxA</name>
    <name type="ordered locus">Suden_1463</name>
</gene>
<protein>
    <recommendedName>
        <fullName evidence="1">Acyl-[acyl-carrier-protein]--UDP-N-acetylglucosamine O-acyltransferase</fullName>
        <shortName evidence="1">UDP-N-acetylglucosamine acyltransferase</shortName>
        <ecNumber evidence="1">2.3.1.129</ecNumber>
    </recommendedName>
</protein>
<dbReference type="EC" id="2.3.1.129" evidence="1"/>
<dbReference type="EMBL" id="CP000153">
    <property type="protein sequence ID" value="ABB44740.1"/>
    <property type="molecule type" value="Genomic_DNA"/>
</dbReference>
<dbReference type="RefSeq" id="WP_011373092.1">
    <property type="nucleotide sequence ID" value="NC_007575.1"/>
</dbReference>
<dbReference type="SMR" id="Q30QJ1"/>
<dbReference type="STRING" id="326298.Suden_1463"/>
<dbReference type="KEGG" id="tdn:Suden_1463"/>
<dbReference type="eggNOG" id="COG1043">
    <property type="taxonomic scope" value="Bacteria"/>
</dbReference>
<dbReference type="HOGENOM" id="CLU_061249_0_0_7"/>
<dbReference type="UniPathway" id="UPA00359">
    <property type="reaction ID" value="UER00477"/>
</dbReference>
<dbReference type="Proteomes" id="UP000002714">
    <property type="component" value="Chromosome"/>
</dbReference>
<dbReference type="GO" id="GO:0005737">
    <property type="term" value="C:cytoplasm"/>
    <property type="evidence" value="ECO:0007669"/>
    <property type="project" value="UniProtKB-SubCell"/>
</dbReference>
<dbReference type="GO" id="GO:0016020">
    <property type="term" value="C:membrane"/>
    <property type="evidence" value="ECO:0007669"/>
    <property type="project" value="GOC"/>
</dbReference>
<dbReference type="GO" id="GO:0008780">
    <property type="term" value="F:acyl-[acyl-carrier-protein]-UDP-N-acetylglucosamine O-acyltransferase activity"/>
    <property type="evidence" value="ECO:0007669"/>
    <property type="project" value="UniProtKB-UniRule"/>
</dbReference>
<dbReference type="GO" id="GO:0009245">
    <property type="term" value="P:lipid A biosynthetic process"/>
    <property type="evidence" value="ECO:0007669"/>
    <property type="project" value="UniProtKB-UniRule"/>
</dbReference>
<dbReference type="CDD" id="cd03351">
    <property type="entry name" value="LbH_UDP-GlcNAc_AT"/>
    <property type="match status" value="1"/>
</dbReference>
<dbReference type="Gene3D" id="2.160.10.10">
    <property type="entry name" value="Hexapeptide repeat proteins"/>
    <property type="match status" value="1"/>
</dbReference>
<dbReference type="Gene3D" id="1.20.1180.10">
    <property type="entry name" value="Udp N-acetylglucosamine O-acyltransferase, C-terminal domain"/>
    <property type="match status" value="1"/>
</dbReference>
<dbReference type="HAMAP" id="MF_00387">
    <property type="entry name" value="LpxA"/>
    <property type="match status" value="1"/>
</dbReference>
<dbReference type="InterPro" id="IPR029098">
    <property type="entry name" value="Acetyltransf_C"/>
</dbReference>
<dbReference type="InterPro" id="IPR037157">
    <property type="entry name" value="Acetyltransf_C_sf"/>
</dbReference>
<dbReference type="InterPro" id="IPR001451">
    <property type="entry name" value="Hexapep"/>
</dbReference>
<dbReference type="InterPro" id="IPR018357">
    <property type="entry name" value="Hexapep_transf_CS"/>
</dbReference>
<dbReference type="InterPro" id="IPR010137">
    <property type="entry name" value="Lipid_A_LpxA"/>
</dbReference>
<dbReference type="InterPro" id="IPR011004">
    <property type="entry name" value="Trimer_LpxA-like_sf"/>
</dbReference>
<dbReference type="NCBIfam" id="TIGR01852">
    <property type="entry name" value="lipid_A_lpxA"/>
    <property type="match status" value="1"/>
</dbReference>
<dbReference type="NCBIfam" id="NF003657">
    <property type="entry name" value="PRK05289.1"/>
    <property type="match status" value="1"/>
</dbReference>
<dbReference type="PANTHER" id="PTHR43480">
    <property type="entry name" value="ACYL-[ACYL-CARRIER-PROTEIN]--UDP-N-ACETYLGLUCOSAMINE O-ACYLTRANSFERASE"/>
    <property type="match status" value="1"/>
</dbReference>
<dbReference type="PANTHER" id="PTHR43480:SF1">
    <property type="entry name" value="ACYL-[ACYL-CARRIER-PROTEIN]--UDP-N-ACETYLGLUCOSAMINE O-ACYLTRANSFERASE, MITOCHONDRIAL-RELATED"/>
    <property type="match status" value="1"/>
</dbReference>
<dbReference type="Pfam" id="PF13720">
    <property type="entry name" value="Acetyltransf_11"/>
    <property type="match status" value="1"/>
</dbReference>
<dbReference type="Pfam" id="PF00132">
    <property type="entry name" value="Hexapep"/>
    <property type="match status" value="1"/>
</dbReference>
<dbReference type="PIRSF" id="PIRSF000456">
    <property type="entry name" value="UDP-GlcNAc_acltr"/>
    <property type="match status" value="1"/>
</dbReference>
<dbReference type="SUPFAM" id="SSF51161">
    <property type="entry name" value="Trimeric LpxA-like enzymes"/>
    <property type="match status" value="1"/>
</dbReference>
<dbReference type="PROSITE" id="PS00101">
    <property type="entry name" value="HEXAPEP_TRANSFERASES"/>
    <property type="match status" value="1"/>
</dbReference>
<organism>
    <name type="scientific">Sulfurimonas denitrificans (strain ATCC 33889 / DSM 1251)</name>
    <name type="common">Thiomicrospira denitrificans (strain ATCC 33889 / DSM 1251)</name>
    <dbReference type="NCBI Taxonomy" id="326298"/>
    <lineage>
        <taxon>Bacteria</taxon>
        <taxon>Pseudomonadati</taxon>
        <taxon>Campylobacterota</taxon>
        <taxon>Epsilonproteobacteria</taxon>
        <taxon>Campylobacterales</taxon>
        <taxon>Sulfurimonadaceae</taxon>
        <taxon>Sulfurimonas</taxon>
    </lineage>
</organism>